<dbReference type="EC" id="2.4.1.15"/>
<dbReference type="EMBL" id="AJ512333">
    <property type="protein sequence ID" value="CAD54507.2"/>
    <property type="status" value="ALT_FRAME"/>
    <property type="molecule type" value="mRNA"/>
</dbReference>
<dbReference type="EMBL" id="AJ811574">
    <property type="protein sequence ID" value="CAH18872.1"/>
    <property type="molecule type" value="mRNA"/>
</dbReference>
<dbReference type="EMBL" id="Z93378">
    <property type="protein sequence ID" value="CAB07584.3"/>
    <property type="molecule type" value="Genomic_DNA"/>
</dbReference>
<dbReference type="PIR" id="T21127">
    <property type="entry name" value="T21127"/>
</dbReference>
<dbReference type="RefSeq" id="NP_497035.3">
    <property type="nucleotide sequence ID" value="NM_064634.5"/>
</dbReference>
<dbReference type="SMR" id="O45380"/>
<dbReference type="BioGRID" id="532368">
    <property type="interactions" value="1"/>
</dbReference>
<dbReference type="FunCoup" id="O45380">
    <property type="interactions" value="1"/>
</dbReference>
<dbReference type="STRING" id="6239.F19H8.1a.1"/>
<dbReference type="CAZy" id="GT20">
    <property type="family name" value="Glycosyltransferase Family 20"/>
</dbReference>
<dbReference type="PaxDb" id="6239-F19H8.1a"/>
<dbReference type="PeptideAtlas" id="O45380"/>
<dbReference type="EnsemblMetazoa" id="F19H8.1a.1">
    <property type="protein sequence ID" value="F19H8.1a.1"/>
    <property type="gene ID" value="WBGene00006603"/>
</dbReference>
<dbReference type="GeneID" id="3565050"/>
<dbReference type="KEGG" id="cel:CELE_F19H8.1"/>
<dbReference type="UCSC" id="F19H8.1">
    <property type="organism name" value="c. elegans"/>
</dbReference>
<dbReference type="AGR" id="WB:WBGene00006603"/>
<dbReference type="CTD" id="3565050"/>
<dbReference type="WormBase" id="F19H8.1a">
    <property type="protein sequence ID" value="CE37507"/>
    <property type="gene ID" value="WBGene00006603"/>
    <property type="gene designation" value="tps-2"/>
</dbReference>
<dbReference type="eggNOG" id="KOG1050">
    <property type="taxonomic scope" value="Eukaryota"/>
</dbReference>
<dbReference type="HOGENOM" id="CLU_007752_0_0_1"/>
<dbReference type="InParanoid" id="O45380"/>
<dbReference type="OMA" id="FGEKFHH"/>
<dbReference type="OrthoDB" id="755951at2759"/>
<dbReference type="PRO" id="PR:O45380"/>
<dbReference type="Proteomes" id="UP000001940">
    <property type="component" value="Chromosome II"/>
</dbReference>
<dbReference type="Bgee" id="WBGene00006603">
    <property type="expression patterns" value="Expressed in larva and 3 other cell types or tissues"/>
</dbReference>
<dbReference type="ExpressionAtlas" id="O45380">
    <property type="expression patterns" value="baseline and differential"/>
</dbReference>
<dbReference type="GO" id="GO:0003825">
    <property type="term" value="F:alpha,alpha-trehalose-phosphate synthase (UDP-forming) activity"/>
    <property type="evidence" value="ECO:0000318"/>
    <property type="project" value="GO_Central"/>
</dbReference>
<dbReference type="GO" id="GO:0004805">
    <property type="term" value="F:trehalose-phosphatase activity"/>
    <property type="evidence" value="ECO:0000318"/>
    <property type="project" value="GO_Central"/>
</dbReference>
<dbReference type="GO" id="GO:0005992">
    <property type="term" value="P:trehalose biosynthetic process"/>
    <property type="evidence" value="ECO:0000318"/>
    <property type="project" value="GO_Central"/>
</dbReference>
<dbReference type="CDD" id="cd03788">
    <property type="entry name" value="GT20_TPS"/>
    <property type="match status" value="1"/>
</dbReference>
<dbReference type="FunFam" id="1.20.58.1800:FF:000001">
    <property type="entry name" value="Alpha,alpha-trehalose-phosphate synthase [UDP-forming] 1"/>
    <property type="match status" value="1"/>
</dbReference>
<dbReference type="FunFam" id="3.30.70.3080:FF:000002">
    <property type="entry name" value="Alpha,alpha-trehalose-phosphate synthase [UDP-forming] 2"/>
    <property type="match status" value="1"/>
</dbReference>
<dbReference type="FunFam" id="3.40.50.2000:FF:000206">
    <property type="entry name" value="Trehalose-6-phosphate synthase"/>
    <property type="match status" value="1"/>
</dbReference>
<dbReference type="Gene3D" id="1.20.58.1800">
    <property type="match status" value="1"/>
</dbReference>
<dbReference type="Gene3D" id="3.30.70.3080">
    <property type="match status" value="1"/>
</dbReference>
<dbReference type="Gene3D" id="3.40.50.2000">
    <property type="entry name" value="Glycogen Phosphorylase B"/>
    <property type="match status" value="2"/>
</dbReference>
<dbReference type="Gene3D" id="3.40.50.1000">
    <property type="entry name" value="HAD superfamily/HAD-like"/>
    <property type="match status" value="1"/>
</dbReference>
<dbReference type="InterPro" id="IPR001830">
    <property type="entry name" value="Glyco_trans_20"/>
</dbReference>
<dbReference type="InterPro" id="IPR036412">
    <property type="entry name" value="HAD-like_sf"/>
</dbReference>
<dbReference type="InterPro" id="IPR023214">
    <property type="entry name" value="HAD_sf"/>
</dbReference>
<dbReference type="InterPro" id="IPR049063">
    <property type="entry name" value="T6PP_C"/>
</dbReference>
<dbReference type="InterPro" id="IPR041064">
    <property type="entry name" value="T6PP_helical"/>
</dbReference>
<dbReference type="PANTHER" id="PTHR10788:SF110">
    <property type="entry name" value="ALPHA,ALPHA-TREHALOSE-PHOSPHATE SYNTHASE [UDP-FORMING] 2"/>
    <property type="match status" value="1"/>
</dbReference>
<dbReference type="PANTHER" id="PTHR10788">
    <property type="entry name" value="TREHALOSE-6-PHOSPHATE SYNTHASE"/>
    <property type="match status" value="1"/>
</dbReference>
<dbReference type="Pfam" id="PF00982">
    <property type="entry name" value="Glyco_transf_20"/>
    <property type="match status" value="1"/>
</dbReference>
<dbReference type="Pfam" id="PF21141">
    <property type="entry name" value="T6PP_C"/>
    <property type="match status" value="1"/>
</dbReference>
<dbReference type="Pfam" id="PF18572">
    <property type="entry name" value="T6PP_N"/>
    <property type="match status" value="1"/>
</dbReference>
<dbReference type="SUPFAM" id="SSF56784">
    <property type="entry name" value="HAD-like"/>
    <property type="match status" value="1"/>
</dbReference>
<dbReference type="SUPFAM" id="SSF53756">
    <property type="entry name" value="UDP-Glycosyltransferase/glycogen phosphorylase"/>
    <property type="match status" value="1"/>
</dbReference>
<proteinExistence type="evidence at transcript level"/>
<sequence length="1229" mass="139911">MGSEPPPSEKKVREPFSRAMKDVQISDEQRLKELWHLLDLLEIEYKKTADLHTLISSVSESLTMVWKRRDPKSELALKGLLLILEYCLSHVFDGHAVFEIFVSSLGFNTVIFWKHCAGYIFDSDLGRGTKFRDALLFSLTLYDVNTGKNRLRELYAAVPGIRKSLLGVNAKQFGERYHHLQKRLARYGSHTSLCSVSSDSEGEEAIHNVRSGTHTESESEEDPKAPRSGLATSHFQQRVINVSNAPPVSLKREKTGDWEIKQGSGGLVACVDPVMSKDHENLWLANLGMNINDKKQKRPGSVASIPESFPSTNTLGLPLIKQTIAEVFFHVLADDDMDAPKNEKQKKAREEMSLLGVLNNYNRGNYKLNPVVVQEDDYNVYYGGISNGLLWPALHNLPEYIVSEYDDEKILRAHWCAYVRVNYQFAIDAVRNSRPQDFIWIHDYHLMLVGMIMQSLDQHLEVGFFLHIPFQPPGEFFSKYSTVGFAVLRGLLRFTKVGFQTHRDRTKYIELVQHYFGTAKIVYDNKMDIYSITNEGWTCSLGVFPVSIKNDDFLKFVDLPETIKLKNDLRKRVMGDTPAPDGRFFFSVERFDYTKGIMEKLQAYKRYFERHPDRIGKDVLFQIAVTNRRSVDTYRVYQDECIDLADKINEIFKDPNNPTWKPLVFQTDGLPRSELVAAYLAMDIGVVTPKKDGMNLVAKEMLVCNPKAGLVLSTGAGSEIQFTTAGLYSDKEKNYHRISNVFDPDSYCDAFYSAALEPEDVRAEHGKRLHEFIMANDIERWSCAFLDPSWTHEVIRPTQVETLDDFFSLMMKTRNVRRQIVGRVLKGIPIRSHFAISLRNAKESLEQICKPGTHTAEFKSGPDSKEVAHFEIDNELQEFERDLSFIDYVQSDDADNVEQFVDTLISSHPISVETYKKEVENAVELLYSADHFHYFFTDRDGTLKSYSCSYPSSIQPAYSGVIQAQFARRCAQTCVILTTAPLMHIGVLDVSTIPNGYYYFGASGGREWFIDNGHNFKDESILKGEKADVLASAYTRISHLLEEPEFRPFTWVGSGLQKHYGHLTIAFQDVYKTITEAQGKQLHEEIEKIVKDVDPHGTRLQLASTEFDIKVYMKTETDGHVFDKGDGLRLLCEKMHCDLTEGNVLVCGDSSTDIPMLKECLIRNPKGVYTIWVTVNDKLKEEVRALCASYSNSNVAFVSCPEVLLGAMAQATIREITITRTRKMSRNIV</sequence>
<comment type="function">
    <text>Catalyzes the production of trehalose from glucose-6-phosphate and UDP-alpha-D-glucose in a 2 step process.</text>
</comment>
<comment type="catalytic activity">
    <reaction>
        <text>D-glucose 6-phosphate + UDP-alpha-D-glucose = alpha,alpha-trehalose 6-phosphate + UDP + H(+)</text>
        <dbReference type="Rhea" id="RHEA:18889"/>
        <dbReference type="ChEBI" id="CHEBI:15378"/>
        <dbReference type="ChEBI" id="CHEBI:58223"/>
        <dbReference type="ChEBI" id="CHEBI:58429"/>
        <dbReference type="ChEBI" id="CHEBI:58885"/>
        <dbReference type="ChEBI" id="CHEBI:61548"/>
        <dbReference type="EC" id="2.4.1.15"/>
    </reaction>
</comment>
<comment type="developmental stage">
    <text evidence="2">Expressed in all development stages.</text>
</comment>
<comment type="disruption phenotype">
    <text evidence="2">No visible phenotype.</text>
</comment>
<comment type="similarity">
    <text evidence="3">In the N-terminal section; belongs to the glycosyltransferase 20 family.</text>
</comment>
<comment type="similarity">
    <text evidence="3">In the C-terminal section; belongs to the gob-1 trehalose phosphatase family.</text>
</comment>
<comment type="sequence caution" evidence="3">
    <conflict type="frameshift">
        <sequence resource="EMBL-CDS" id="CAD54507"/>
    </conflict>
</comment>
<name>TPS2_CAEEL</name>
<accession>O45380</accession>
<accession>Q7YZT5</accession>
<feature type="chain" id="PRO_0000385177" description="Alpha,alpha-trehalose-phosphate synthase [UDP-forming] 2">
    <location>
        <begin position="1"/>
        <end position="1229"/>
    </location>
</feature>
<feature type="region of interest" description="Disordered" evidence="1">
    <location>
        <begin position="196"/>
        <end position="233"/>
    </location>
</feature>
<feature type="compositionally biased region" description="Basic and acidic residues" evidence="1">
    <location>
        <begin position="213"/>
        <end position="225"/>
    </location>
</feature>
<reference key="1">
    <citation type="journal article" date="2003" name="Int. J. Parasitol.">
        <title>Trehalose metabolism genes in Caenorhabditis elegans and filarial nematodes.</title>
        <authorList>
            <person name="Pellerone F.I."/>
            <person name="Archer S.K."/>
            <person name="Behm C.A."/>
            <person name="Grant W.N."/>
            <person name="Lacey M.J."/>
            <person name="Somerville A.C."/>
        </authorList>
    </citation>
    <scope>NUCLEOTIDE SEQUENCE [MRNA]</scope>
    <scope>DEVELOPMENTAL STAGE</scope>
    <scope>DISRUPTION PHENOTYPE</scope>
    <source>
        <strain>Bristol N2</strain>
    </source>
</reference>
<reference key="2">
    <citation type="journal article" date="2005" name="Biochimie">
        <title>Dehydration-induced tps gene transcripts from an anhydrobiotic nematode contain novel spliced leaders and encode atypical GT-20 family proteins.</title>
        <authorList>
            <person name="Goyal K."/>
            <person name="Browne J.A."/>
            <person name="Burnell A.M."/>
            <person name="Tunnacliffe A."/>
        </authorList>
    </citation>
    <scope>NUCLEOTIDE SEQUENCE [MRNA]</scope>
    <source>
        <strain>Bristol N2</strain>
    </source>
</reference>
<reference key="3">
    <citation type="journal article" date="1998" name="Science">
        <title>Genome sequence of the nematode C. elegans: a platform for investigating biology.</title>
        <authorList>
            <consortium name="The C. elegans sequencing consortium"/>
        </authorList>
    </citation>
    <scope>NUCLEOTIDE SEQUENCE [LARGE SCALE GENOMIC DNA]</scope>
    <source>
        <strain>Bristol N2</strain>
    </source>
</reference>
<gene>
    <name type="primary">tps-2</name>
    <name type="synonym">tps2</name>
    <name type="ORF">F19H8.1</name>
</gene>
<evidence type="ECO:0000256" key="1">
    <source>
        <dbReference type="SAM" id="MobiDB-lite"/>
    </source>
</evidence>
<evidence type="ECO:0000269" key="2">
    <source>
    </source>
</evidence>
<evidence type="ECO:0000305" key="3"/>
<keyword id="KW-0328">Glycosyltransferase</keyword>
<keyword id="KW-1185">Reference proteome</keyword>
<keyword id="KW-0808">Transferase</keyword>
<protein>
    <recommendedName>
        <fullName>Alpha,alpha-trehalose-phosphate synthase [UDP-forming] 2</fullName>
        <ecNumber>2.4.1.15</ecNumber>
    </recommendedName>
    <alternativeName>
        <fullName>Trehalose-6-phosphate synthase 2</fullName>
    </alternativeName>
    <alternativeName>
        <fullName>UDP-glucose-glucosephosphate glucosyltransferase 2</fullName>
    </alternativeName>
</protein>
<organism>
    <name type="scientific">Caenorhabditis elegans</name>
    <dbReference type="NCBI Taxonomy" id="6239"/>
    <lineage>
        <taxon>Eukaryota</taxon>
        <taxon>Metazoa</taxon>
        <taxon>Ecdysozoa</taxon>
        <taxon>Nematoda</taxon>
        <taxon>Chromadorea</taxon>
        <taxon>Rhabditida</taxon>
        <taxon>Rhabditina</taxon>
        <taxon>Rhabditomorpha</taxon>
        <taxon>Rhabditoidea</taxon>
        <taxon>Rhabditidae</taxon>
        <taxon>Peloderinae</taxon>
        <taxon>Caenorhabditis</taxon>
    </lineage>
</organism>